<sequence>MADSLLLLKRVPSRHTWLRARKARPQLMLSRRPRRRLRNLRWRSRRRLRRRLLQAQAAGADWLQGGCLVSGDAALQRLKTSARRRASSPEPAEDPVPSGPAILPIPPVRPAGSGRAVLLLPLGQGFTFSGICCVTCLYGQVQVFGFTISQGQPAQNVFSTYTHSRLTINAVHYSVHEKSKKEMKREARVLLRPYLNQDDRYCLMSSFSPLCSIVLLERLKTSTVNFIISHPGLSYIFVQEVRTFQINSEYFALRSVGIRREKKKTGLRLTESAFAVMEELVSISSEEADSCPVILVCGCQDIGKSTFNRYLINQLLNSVSCVDYLECDLGQTEFTPPGCISLLNITEPVLGPPFTHQRTPQKMVYYGKTSCKNNFENYIEVIKYVFSSYKRESPLIINTMGWVADQGLLLLIDLIRLLSPSHVVQFSSDRSKYMPDLTPDFVDDMDGLYTRRRSRVRNRGFHLPEFAESLEFADEEKEGPVMSTGYKLMFVKSEFVTGKTSRNRESHNRILRELAVLGYLSQLQPPVPKPLRALHGLTPYQVPFNAVALRIIHADVAPTHILYAVNASWVGLCKILDDVRGYASGPILLAQSPICDCVGFGICRGIDMEKKLYHILTPVPPEELRHVNCLLVGAVNIPQCVLKSQGGLEGTIPYVTTDYNFKLPGASEKIGARESGATYKEKGHPKPKFYRKTY</sequence>
<protein>
    <recommendedName>
        <fullName>Polynucleotide 5'-hydroxyl-kinase NOL9</fullName>
        <ecNumber evidence="2">2.7.1.78</ecNumber>
    </recommendedName>
    <alternativeName>
        <fullName>Nucleolar protein 9</fullName>
    </alternativeName>
</protein>
<name>NOL9_BOVIN</name>
<keyword id="KW-0007">Acetylation</keyword>
<keyword id="KW-0067">ATP-binding</keyword>
<keyword id="KW-1017">Isopeptide bond</keyword>
<keyword id="KW-0418">Kinase</keyword>
<keyword id="KW-0547">Nucleotide-binding</keyword>
<keyword id="KW-0539">Nucleus</keyword>
<keyword id="KW-1185">Reference proteome</keyword>
<keyword id="KW-0694">RNA-binding</keyword>
<keyword id="KW-0698">rRNA processing</keyword>
<keyword id="KW-0808">Transferase</keyword>
<keyword id="KW-0832">Ubl conjugation</keyword>
<gene>
    <name type="primary">NOL9</name>
</gene>
<comment type="function">
    <text evidence="2">Polynucleotide kinase that can phosphorylate the 5'-hydroxyl groups of single-stranded and double-stranded RNA and DNA substrates (By similarity). Involved in rRNA processing and its kinase activity is required for the processing of the 32S precursor into 5.8S and 28S rRNAs, more specifically for the generation of the major 5.8S(S) form. Required for the efficient pre-rRNA processing of internal transcribed spacer 2 (ITS2). Associates with LAS1L to form an ITS2 pre-rRNA endonuclease-kinase complex and is responsible for the transport of this complex into the nucleolus (By similarity).</text>
</comment>
<comment type="catalytic activity">
    <reaction evidence="2">
        <text>a 5'-end dephospho-2'-deoxyribonucleoside-DNA + ATP = a 5'-end 5'-phospho-2'-deoxyribonucleoside-DNA + ADP + H(+)</text>
        <dbReference type="Rhea" id="RHEA:15669"/>
        <dbReference type="Rhea" id="RHEA-COMP:13180"/>
        <dbReference type="Rhea" id="RHEA-COMP:13184"/>
        <dbReference type="ChEBI" id="CHEBI:15378"/>
        <dbReference type="ChEBI" id="CHEBI:30616"/>
        <dbReference type="ChEBI" id="CHEBI:136412"/>
        <dbReference type="ChEBI" id="CHEBI:136416"/>
        <dbReference type="ChEBI" id="CHEBI:456216"/>
        <dbReference type="EC" id="2.7.1.78"/>
    </reaction>
</comment>
<comment type="catalytic activity">
    <reaction evidence="2">
        <text>a 5'-end dephospho-ribonucleoside-RNA + ATP = a 5'-end 5'-phospho-ribonucleoside-RNA + ADP + H(+)</text>
        <dbReference type="Rhea" id="RHEA:54580"/>
        <dbReference type="Rhea" id="RHEA-COMP:13936"/>
        <dbReference type="Rhea" id="RHEA-COMP:15179"/>
        <dbReference type="ChEBI" id="CHEBI:15378"/>
        <dbReference type="ChEBI" id="CHEBI:30616"/>
        <dbReference type="ChEBI" id="CHEBI:138282"/>
        <dbReference type="ChEBI" id="CHEBI:138284"/>
        <dbReference type="ChEBI" id="CHEBI:456216"/>
        <dbReference type="EC" id="2.7.1.78"/>
    </reaction>
</comment>
<comment type="subunit">
    <text evidence="1 2">Interacts with PELP1, WDR18 and SENP3. Interacts with LAS1L to form an ITS2 pre-rRNA endonuclease-kinase complex.</text>
</comment>
<comment type="subcellular location">
    <subcellularLocation>
        <location evidence="1">Nucleus</location>
    </subcellularLocation>
    <subcellularLocation>
        <location evidence="2">Nucleus</location>
        <location evidence="2">Nucleolus</location>
    </subcellularLocation>
    <text evidence="2">Colocalizes with pre-60S rRNP particles.</text>
</comment>
<comment type="similarity">
    <text evidence="5">Belongs to the Clp1 family. NOL9/GRC3 subfamily.</text>
</comment>
<feature type="initiator methionine" description="Removed" evidence="2">
    <location>
        <position position="1"/>
    </location>
</feature>
<feature type="chain" id="PRO_0000403777" description="Polynucleotide 5'-hydroxyl-kinase NOL9">
    <location>
        <begin position="2"/>
        <end position="694"/>
    </location>
</feature>
<feature type="region of interest" description="Disordered" evidence="4">
    <location>
        <begin position="80"/>
        <end position="101"/>
    </location>
</feature>
<feature type="region of interest" description="Interaction with LAS1L" evidence="2">
    <location>
        <begin position="472"/>
        <end position="694"/>
    </location>
</feature>
<feature type="short sequence motif" description="Nucleolar localization signal" evidence="2">
    <location>
        <begin position="31"/>
        <end position="47"/>
    </location>
</feature>
<feature type="binding site" evidence="3">
    <location>
        <begin position="298"/>
        <end position="305"/>
    </location>
    <ligand>
        <name>ATP</name>
        <dbReference type="ChEBI" id="CHEBI:30616"/>
    </ligand>
</feature>
<feature type="modified residue" description="N-acetylalanine" evidence="2">
    <location>
        <position position="2"/>
    </location>
</feature>
<feature type="cross-link" description="Glycyl lysine isopeptide (Lys-Gly) (interchain with G-Cter in SUMO2)" evidence="2">
    <location>
        <position position="477"/>
    </location>
</feature>
<organism>
    <name type="scientific">Bos taurus</name>
    <name type="common">Bovine</name>
    <dbReference type="NCBI Taxonomy" id="9913"/>
    <lineage>
        <taxon>Eukaryota</taxon>
        <taxon>Metazoa</taxon>
        <taxon>Chordata</taxon>
        <taxon>Craniata</taxon>
        <taxon>Vertebrata</taxon>
        <taxon>Euteleostomi</taxon>
        <taxon>Mammalia</taxon>
        <taxon>Eutheria</taxon>
        <taxon>Laurasiatheria</taxon>
        <taxon>Artiodactyla</taxon>
        <taxon>Ruminantia</taxon>
        <taxon>Pecora</taxon>
        <taxon>Bovidae</taxon>
        <taxon>Bovinae</taxon>
        <taxon>Bos</taxon>
    </lineage>
</organism>
<accession>E1BPN0</accession>
<dbReference type="EC" id="2.7.1.78" evidence="2"/>
<dbReference type="EMBL" id="AAFC03030715">
    <property type="status" value="NOT_ANNOTATED_CDS"/>
    <property type="molecule type" value="Genomic_DNA"/>
</dbReference>
<dbReference type="RefSeq" id="NP_001193528.1">
    <property type="nucleotide sequence ID" value="NM_001206599.1"/>
</dbReference>
<dbReference type="SMR" id="E1BPN0"/>
<dbReference type="FunCoup" id="E1BPN0">
    <property type="interactions" value="3849"/>
</dbReference>
<dbReference type="STRING" id="9913.ENSBTAP00000022240"/>
<dbReference type="PaxDb" id="9913-ENSBTAP00000022240"/>
<dbReference type="GeneID" id="523474"/>
<dbReference type="KEGG" id="bta:523474"/>
<dbReference type="CTD" id="79707"/>
<dbReference type="eggNOG" id="KOG2750">
    <property type="taxonomic scope" value="Eukaryota"/>
</dbReference>
<dbReference type="HOGENOM" id="CLU_021128_2_0_1"/>
<dbReference type="InParanoid" id="E1BPN0"/>
<dbReference type="OrthoDB" id="2405412at2759"/>
<dbReference type="TreeFam" id="TF313802"/>
<dbReference type="Proteomes" id="UP000009136">
    <property type="component" value="Unplaced"/>
</dbReference>
<dbReference type="GO" id="GO:0005730">
    <property type="term" value="C:nucleolus"/>
    <property type="evidence" value="ECO:0000250"/>
    <property type="project" value="UniProtKB"/>
</dbReference>
<dbReference type="GO" id="GO:0005634">
    <property type="term" value="C:nucleus"/>
    <property type="evidence" value="ECO:0000318"/>
    <property type="project" value="GO_Central"/>
</dbReference>
<dbReference type="GO" id="GO:0005524">
    <property type="term" value="F:ATP binding"/>
    <property type="evidence" value="ECO:0007669"/>
    <property type="project" value="UniProtKB-KW"/>
</dbReference>
<dbReference type="GO" id="GO:0046404">
    <property type="term" value="F:ATP-dependent polydeoxyribonucleotide 5'-hydroxyl-kinase activity"/>
    <property type="evidence" value="ECO:0000250"/>
    <property type="project" value="UniProtKB"/>
</dbReference>
<dbReference type="GO" id="GO:0051736">
    <property type="term" value="F:ATP-dependent polyribonucleotide 5'-hydroxyl-kinase activity"/>
    <property type="evidence" value="ECO:0007669"/>
    <property type="project" value="RHEA"/>
</dbReference>
<dbReference type="GO" id="GO:0051731">
    <property type="term" value="F:polynucleotide 5'-hydroxyl-kinase activity"/>
    <property type="evidence" value="ECO:0000318"/>
    <property type="project" value="GO_Central"/>
</dbReference>
<dbReference type="GO" id="GO:0003723">
    <property type="term" value="F:RNA binding"/>
    <property type="evidence" value="ECO:0007669"/>
    <property type="project" value="UniProtKB-KW"/>
</dbReference>
<dbReference type="GO" id="GO:0000448">
    <property type="term" value="P:cleavage in ITS2 between 5.8S rRNA and LSU-rRNA of tricistronic rRNA transcript (SSU-rRNA, 5.8S rRNA, LSU-rRNA)"/>
    <property type="evidence" value="ECO:0000318"/>
    <property type="project" value="GO_Central"/>
</dbReference>
<dbReference type="GO" id="GO:0000460">
    <property type="term" value="P:maturation of 5.8S rRNA"/>
    <property type="evidence" value="ECO:0000250"/>
    <property type="project" value="UniProtKB"/>
</dbReference>
<dbReference type="FunFam" id="3.40.50.300:FF:001243">
    <property type="entry name" value="Nucleolar protein 9"/>
    <property type="match status" value="1"/>
</dbReference>
<dbReference type="Gene3D" id="3.40.50.300">
    <property type="entry name" value="P-loop containing nucleotide triphosphate hydrolases"/>
    <property type="match status" value="1"/>
</dbReference>
<dbReference type="InterPro" id="IPR045116">
    <property type="entry name" value="Clp1/Grc3"/>
</dbReference>
<dbReference type="InterPro" id="IPR032319">
    <property type="entry name" value="CLP1_P"/>
</dbReference>
<dbReference type="InterPro" id="IPR027417">
    <property type="entry name" value="P-loop_NTPase"/>
</dbReference>
<dbReference type="PANTHER" id="PTHR12755">
    <property type="entry name" value="CLEAVAGE/POLYADENYLATION FACTOR IA SUBUNIT CLP1P"/>
    <property type="match status" value="1"/>
</dbReference>
<dbReference type="PANTHER" id="PTHR12755:SF3">
    <property type="entry name" value="POLYNUCLEOTIDE 5'-HYDROXYL-KINASE NOL9"/>
    <property type="match status" value="1"/>
</dbReference>
<dbReference type="Pfam" id="PF16575">
    <property type="entry name" value="CLP1_P"/>
    <property type="match status" value="1"/>
</dbReference>
<dbReference type="Pfam" id="PF24419">
    <property type="entry name" value="Cupin_NOL9"/>
    <property type="match status" value="1"/>
</dbReference>
<dbReference type="Pfam" id="PF25467">
    <property type="entry name" value="NOL9_C"/>
    <property type="match status" value="1"/>
</dbReference>
<evidence type="ECO:0000250" key="1">
    <source>
        <dbReference type="UniProtKB" id="Q3TZX8"/>
    </source>
</evidence>
<evidence type="ECO:0000250" key="2">
    <source>
        <dbReference type="UniProtKB" id="Q5SY16"/>
    </source>
</evidence>
<evidence type="ECO:0000255" key="3"/>
<evidence type="ECO:0000256" key="4">
    <source>
        <dbReference type="SAM" id="MobiDB-lite"/>
    </source>
</evidence>
<evidence type="ECO:0000305" key="5"/>
<reference key="1">
    <citation type="journal article" date="2009" name="Science">
        <title>The genome sequence of taurine cattle: a window to ruminant biology and evolution.</title>
        <authorList>
            <consortium name="The bovine genome sequencing and analysis consortium"/>
        </authorList>
    </citation>
    <scope>NUCLEOTIDE SEQUENCE [LARGE SCALE GENOMIC DNA]</scope>
</reference>
<proteinExistence type="inferred from homology"/>